<proteinExistence type="inferred from homology"/>
<gene>
    <name evidence="1" type="primary">rpsE</name>
    <name type="ordered locus">Krad_0705</name>
</gene>
<sequence>MPGPQRRGAGGTGAAGGDNRGGGGDNRGRRDNNGGGRDRGRGDAGDRSNFVERVVTINRVAKVVKGGRRFSFTALVVVGDGDGTVGVGYGKAKEVPAAIAKGVEEAKKNFFRVPRIQGTIPHPIQGEKAAGVVMLRPASPGTGVIAGGPVRAVLECAGIHDVLSKSLGSDNAINIVHATIEALRGLERPEQVAARRGLPVEHVAPVALLRAQAAGVTA</sequence>
<evidence type="ECO:0000255" key="1">
    <source>
        <dbReference type="HAMAP-Rule" id="MF_01307"/>
    </source>
</evidence>
<evidence type="ECO:0000256" key="2">
    <source>
        <dbReference type="SAM" id="MobiDB-lite"/>
    </source>
</evidence>
<evidence type="ECO:0000305" key="3"/>
<feature type="chain" id="PRO_1000086020" description="Small ribosomal subunit protein uS5">
    <location>
        <begin position="1"/>
        <end position="218"/>
    </location>
</feature>
<feature type="domain" description="S5 DRBM" evidence="1">
    <location>
        <begin position="50"/>
        <end position="113"/>
    </location>
</feature>
<feature type="region of interest" description="Disordered" evidence="2">
    <location>
        <begin position="1"/>
        <end position="46"/>
    </location>
</feature>
<feature type="compositionally biased region" description="Gly residues" evidence="2">
    <location>
        <begin position="8"/>
        <end position="25"/>
    </location>
</feature>
<feature type="compositionally biased region" description="Basic and acidic residues" evidence="2">
    <location>
        <begin position="26"/>
        <end position="46"/>
    </location>
</feature>
<keyword id="KW-1185">Reference proteome</keyword>
<keyword id="KW-0687">Ribonucleoprotein</keyword>
<keyword id="KW-0689">Ribosomal protein</keyword>
<keyword id="KW-0694">RNA-binding</keyword>
<keyword id="KW-0699">rRNA-binding</keyword>
<dbReference type="EMBL" id="CP000750">
    <property type="protein sequence ID" value="ABS02194.1"/>
    <property type="molecule type" value="Genomic_DNA"/>
</dbReference>
<dbReference type="RefSeq" id="WP_012084963.1">
    <property type="nucleotide sequence ID" value="NC_009664.2"/>
</dbReference>
<dbReference type="SMR" id="A6W5V5"/>
<dbReference type="STRING" id="266940.Krad_0705"/>
<dbReference type="KEGG" id="kra:Krad_0705"/>
<dbReference type="eggNOG" id="COG0098">
    <property type="taxonomic scope" value="Bacteria"/>
</dbReference>
<dbReference type="HOGENOM" id="CLU_065898_1_2_11"/>
<dbReference type="OrthoDB" id="9809045at2"/>
<dbReference type="Proteomes" id="UP000001116">
    <property type="component" value="Chromosome"/>
</dbReference>
<dbReference type="GO" id="GO:0015935">
    <property type="term" value="C:small ribosomal subunit"/>
    <property type="evidence" value="ECO:0007669"/>
    <property type="project" value="InterPro"/>
</dbReference>
<dbReference type="GO" id="GO:0019843">
    <property type="term" value="F:rRNA binding"/>
    <property type="evidence" value="ECO:0007669"/>
    <property type="project" value="UniProtKB-UniRule"/>
</dbReference>
<dbReference type="GO" id="GO:0003735">
    <property type="term" value="F:structural constituent of ribosome"/>
    <property type="evidence" value="ECO:0007669"/>
    <property type="project" value="InterPro"/>
</dbReference>
<dbReference type="GO" id="GO:0006412">
    <property type="term" value="P:translation"/>
    <property type="evidence" value="ECO:0007669"/>
    <property type="project" value="UniProtKB-UniRule"/>
</dbReference>
<dbReference type="FunFam" id="3.30.160.20:FF:000001">
    <property type="entry name" value="30S ribosomal protein S5"/>
    <property type="match status" value="1"/>
</dbReference>
<dbReference type="FunFam" id="3.30.230.10:FF:000002">
    <property type="entry name" value="30S ribosomal protein S5"/>
    <property type="match status" value="1"/>
</dbReference>
<dbReference type="Gene3D" id="3.30.160.20">
    <property type="match status" value="1"/>
</dbReference>
<dbReference type="Gene3D" id="3.30.230.10">
    <property type="match status" value="1"/>
</dbReference>
<dbReference type="HAMAP" id="MF_01307_B">
    <property type="entry name" value="Ribosomal_uS5_B"/>
    <property type="match status" value="1"/>
</dbReference>
<dbReference type="InterPro" id="IPR020568">
    <property type="entry name" value="Ribosomal_Su5_D2-typ_SF"/>
</dbReference>
<dbReference type="InterPro" id="IPR000851">
    <property type="entry name" value="Ribosomal_uS5"/>
</dbReference>
<dbReference type="InterPro" id="IPR005712">
    <property type="entry name" value="Ribosomal_uS5_bac-type"/>
</dbReference>
<dbReference type="InterPro" id="IPR005324">
    <property type="entry name" value="Ribosomal_uS5_C"/>
</dbReference>
<dbReference type="InterPro" id="IPR013810">
    <property type="entry name" value="Ribosomal_uS5_N"/>
</dbReference>
<dbReference type="InterPro" id="IPR018192">
    <property type="entry name" value="Ribosomal_uS5_N_CS"/>
</dbReference>
<dbReference type="InterPro" id="IPR014721">
    <property type="entry name" value="Ribsml_uS5_D2-typ_fold_subgr"/>
</dbReference>
<dbReference type="NCBIfam" id="TIGR01021">
    <property type="entry name" value="rpsE_bact"/>
    <property type="match status" value="1"/>
</dbReference>
<dbReference type="PANTHER" id="PTHR48277">
    <property type="entry name" value="MITOCHONDRIAL RIBOSOMAL PROTEIN S5"/>
    <property type="match status" value="1"/>
</dbReference>
<dbReference type="PANTHER" id="PTHR48277:SF1">
    <property type="entry name" value="MITOCHONDRIAL RIBOSOMAL PROTEIN S5"/>
    <property type="match status" value="1"/>
</dbReference>
<dbReference type="Pfam" id="PF00333">
    <property type="entry name" value="Ribosomal_S5"/>
    <property type="match status" value="1"/>
</dbReference>
<dbReference type="Pfam" id="PF03719">
    <property type="entry name" value="Ribosomal_S5_C"/>
    <property type="match status" value="1"/>
</dbReference>
<dbReference type="SUPFAM" id="SSF54768">
    <property type="entry name" value="dsRNA-binding domain-like"/>
    <property type="match status" value="1"/>
</dbReference>
<dbReference type="SUPFAM" id="SSF54211">
    <property type="entry name" value="Ribosomal protein S5 domain 2-like"/>
    <property type="match status" value="1"/>
</dbReference>
<dbReference type="PROSITE" id="PS00585">
    <property type="entry name" value="RIBOSOMAL_S5"/>
    <property type="match status" value="1"/>
</dbReference>
<dbReference type="PROSITE" id="PS50881">
    <property type="entry name" value="S5_DSRBD"/>
    <property type="match status" value="1"/>
</dbReference>
<name>RS5_KINRD</name>
<reference key="1">
    <citation type="journal article" date="2008" name="PLoS ONE">
        <title>Survival in nuclear waste, extreme resistance, and potential applications gleaned from the genome sequence of Kineococcus radiotolerans SRS30216.</title>
        <authorList>
            <person name="Bagwell C.E."/>
            <person name="Bhat S."/>
            <person name="Hawkins G.M."/>
            <person name="Smith B.W."/>
            <person name="Biswas T."/>
            <person name="Hoover T.R."/>
            <person name="Saunders E."/>
            <person name="Han C.S."/>
            <person name="Tsodikov O.V."/>
            <person name="Shimkets L.J."/>
        </authorList>
    </citation>
    <scope>NUCLEOTIDE SEQUENCE [LARGE SCALE GENOMIC DNA]</scope>
    <source>
        <strain>ATCC BAA-149 / DSM 14245 / SRS30216</strain>
    </source>
</reference>
<comment type="function">
    <text evidence="1">With S4 and S12 plays an important role in translational accuracy.</text>
</comment>
<comment type="function">
    <text evidence="1">Located at the back of the 30S subunit body where it stabilizes the conformation of the head with respect to the body.</text>
</comment>
<comment type="subunit">
    <text evidence="1">Part of the 30S ribosomal subunit. Contacts proteins S4 and S8.</text>
</comment>
<comment type="domain">
    <text>The N-terminal domain interacts with the head of the 30S subunit; the C-terminal domain interacts with the body and contacts protein S4. The interaction surface between S4 and S5 is involved in control of translational fidelity.</text>
</comment>
<comment type="similarity">
    <text evidence="1">Belongs to the universal ribosomal protein uS5 family.</text>
</comment>
<protein>
    <recommendedName>
        <fullName evidence="1">Small ribosomal subunit protein uS5</fullName>
    </recommendedName>
    <alternativeName>
        <fullName evidence="3">30S ribosomal protein S5</fullName>
    </alternativeName>
</protein>
<accession>A6W5V5</accession>
<organism>
    <name type="scientific">Kineococcus radiotolerans (strain ATCC BAA-149 / DSM 14245 / SRS30216)</name>
    <dbReference type="NCBI Taxonomy" id="266940"/>
    <lineage>
        <taxon>Bacteria</taxon>
        <taxon>Bacillati</taxon>
        <taxon>Actinomycetota</taxon>
        <taxon>Actinomycetes</taxon>
        <taxon>Kineosporiales</taxon>
        <taxon>Kineosporiaceae</taxon>
        <taxon>Kineococcus</taxon>
    </lineage>
</organism>